<gene>
    <name type="primary">RFK</name>
</gene>
<comment type="function">
    <text evidence="4">Catalyzes the phosphorylation of riboflavin (vitamin B2) to form flavin-mononucleotide (FMN), hence rate-limiting enzyme in the synthesis of FAD. Essential for TNF-induced reactive oxygen species (ROS) production. Through its interaction with both TNFRSF1A and CYBA, physically and functionally couples TNFRSF1A to NADPH oxidase. TNF-activation of RFK may enhance the incorporation of FAD in NADPH oxidase, a critical step for the assembly and activation of NADPH oxidase.</text>
</comment>
<comment type="catalytic activity">
    <reaction evidence="4">
        <text>riboflavin + ATP = FMN + ADP + H(+)</text>
        <dbReference type="Rhea" id="RHEA:14357"/>
        <dbReference type="ChEBI" id="CHEBI:15378"/>
        <dbReference type="ChEBI" id="CHEBI:30616"/>
        <dbReference type="ChEBI" id="CHEBI:57986"/>
        <dbReference type="ChEBI" id="CHEBI:58210"/>
        <dbReference type="ChEBI" id="CHEBI:456216"/>
        <dbReference type="EC" id="2.7.1.26"/>
    </reaction>
    <physiologicalReaction direction="left-to-right" evidence="6">
        <dbReference type="Rhea" id="RHEA:14358"/>
    </physiologicalReaction>
</comment>
<comment type="cofactor">
    <cofactor>
        <name>Zn(2+)</name>
        <dbReference type="ChEBI" id="CHEBI:29105"/>
    </cofactor>
    <cofactor evidence="2 3">
        <name>Mg(2+)</name>
        <dbReference type="ChEBI" id="CHEBI:18420"/>
    </cofactor>
    <text>Zinc or magnesium.</text>
</comment>
<comment type="pathway">
    <text evidence="4">Cofactor biosynthesis; FMN biosynthesis; FMN from riboflavin (ATP route): step 1/1.</text>
</comment>
<comment type="subunit">
    <text evidence="2 4">Monomer. Directly interacts with TNFRSF1A death domain. TNFRSF1A-binding may be supported by TRADD. In the absence of TNFRSF1A, interacts with TRADD. Independently of TNFRSF1A, interacts with the NADPH oxidase subunit CYBA.</text>
</comment>
<comment type="interaction">
    <interactant intactId="EBI-716872">
        <id>Q969G6</id>
    </interactant>
    <interactant intactId="EBI-9640137">
        <id>Q9NXG0-2</id>
        <label>CNTLN</label>
    </interactant>
    <organismsDiffer>false</organismsDiffer>
    <experiments>3</experiments>
</comment>
<comment type="interaction">
    <interactant intactId="EBI-716872">
        <id>Q969G6</id>
    </interactant>
    <interactant intactId="EBI-299451">
        <id>P19438</id>
        <label>TNFRSF1A</label>
    </interactant>
    <organismsDiffer>false</organismsDiffer>
    <experiments>4</experiments>
</comment>
<comment type="interaction">
    <interactant intactId="EBI-716872">
        <id>Q969G6</id>
    </interactant>
    <interactant intactId="EBI-15795644">
        <id>P19438-1</id>
        <label>TNFRSF1A</label>
    </interactant>
    <organismsDiffer>false</organismsDiffer>
    <experiments>2</experiments>
</comment>
<comment type="subcellular location">
    <subcellularLocation>
        <location evidence="1">Cytoplasm</location>
    </subcellularLocation>
</comment>
<comment type="tissue specificity">
    <text>Detected in brain, placenta and urinary bladder.</text>
</comment>
<comment type="sequence caution" evidence="5">
    <conflict type="erroneous initiation">
        <sequence resource="EMBL-CDS" id="AAH07069"/>
    </conflict>
    <text>Extended N-terminus.</text>
</comment>
<comment type="sequence caution" evidence="5">
    <conflict type="erroneous initiation">
        <sequence resource="EMBL-CDS" id="BAA92033"/>
    </conflict>
    <text>Extended N-terminus.</text>
</comment>
<keyword id="KW-0002">3D-structure</keyword>
<keyword id="KW-0067">ATP-binding</keyword>
<keyword id="KW-0963">Cytoplasm</keyword>
<keyword id="KW-0285">Flavoprotein</keyword>
<keyword id="KW-0288">FMN</keyword>
<keyword id="KW-0418">Kinase</keyword>
<keyword id="KW-0460">Magnesium</keyword>
<keyword id="KW-0479">Metal-binding</keyword>
<keyword id="KW-0547">Nucleotide-binding</keyword>
<keyword id="KW-1267">Proteomics identification</keyword>
<keyword id="KW-1185">Reference proteome</keyword>
<keyword id="KW-0808">Transferase</keyword>
<keyword id="KW-0862">Zinc</keyword>
<accession>Q969G6</accession>
<accession>Q5JSG9</accession>
<accession>Q9NUT7</accession>
<sequence length="155" mass="17623">MRHLPYFCRGQVVRGFGRGSKQLGIPTANFPEQVVDNLPADISTGIYYGWASVGSGDVHKMVVSIGWNPYYKNTKKSMETHIMHTFKEDFYGEILNVAIVGYLRPEKNFDSLESLISAIQGDIEEAKKRLELPEHLKIKEDNFFQVSKSKIMNGH</sequence>
<evidence type="ECO:0000250" key="1"/>
<evidence type="ECO:0000269" key="2">
    <source>
    </source>
</evidence>
<evidence type="ECO:0000269" key="3">
    <source>
    </source>
</evidence>
<evidence type="ECO:0000269" key="4">
    <source>
    </source>
</evidence>
<evidence type="ECO:0000305" key="5"/>
<evidence type="ECO:0000305" key="6">
    <source>
    </source>
</evidence>
<evidence type="ECO:0007744" key="7">
    <source>
        <dbReference type="PDB" id="1NB0"/>
    </source>
</evidence>
<evidence type="ECO:0007744" key="8">
    <source>
        <dbReference type="PDB" id="1NB9"/>
    </source>
</evidence>
<evidence type="ECO:0007744" key="9">
    <source>
        <dbReference type="PDB" id="1P4M"/>
    </source>
</evidence>
<evidence type="ECO:0007744" key="10">
    <source>
        <dbReference type="PDB" id="1Q9S"/>
    </source>
</evidence>
<evidence type="ECO:0007829" key="11">
    <source>
        <dbReference type="PDB" id="1NB0"/>
    </source>
</evidence>
<dbReference type="EC" id="2.7.1.26" evidence="4"/>
<dbReference type="EMBL" id="AK002011">
    <property type="protein sequence ID" value="BAA92033.1"/>
    <property type="status" value="ALT_INIT"/>
    <property type="molecule type" value="mRNA"/>
</dbReference>
<dbReference type="EMBL" id="AL391868">
    <property type="status" value="NOT_ANNOTATED_CDS"/>
    <property type="molecule type" value="Genomic_DNA"/>
</dbReference>
<dbReference type="EMBL" id="BC007069">
    <property type="protein sequence ID" value="AAH07069.1"/>
    <property type="status" value="ALT_INIT"/>
    <property type="molecule type" value="mRNA"/>
</dbReference>
<dbReference type="CCDS" id="CCDS35044.2"/>
<dbReference type="RefSeq" id="NP_060809.3">
    <property type="nucleotide sequence ID" value="NM_018339.5"/>
</dbReference>
<dbReference type="PDB" id="1NB0">
    <property type="method" value="X-ray"/>
    <property type="resolution" value="1.70 A"/>
    <property type="chains" value="A=2-148"/>
</dbReference>
<dbReference type="PDB" id="1NB9">
    <property type="method" value="X-ray"/>
    <property type="resolution" value="1.70 A"/>
    <property type="chains" value="A=2-148"/>
</dbReference>
<dbReference type="PDB" id="1P4M">
    <property type="method" value="X-ray"/>
    <property type="resolution" value="1.80 A"/>
    <property type="chains" value="A=2-148"/>
</dbReference>
<dbReference type="PDB" id="1Q9S">
    <property type="method" value="X-ray"/>
    <property type="resolution" value="2.42 A"/>
    <property type="chains" value="A=1-148"/>
</dbReference>
<dbReference type="PDBsum" id="1NB0"/>
<dbReference type="PDBsum" id="1NB9"/>
<dbReference type="PDBsum" id="1P4M"/>
<dbReference type="PDBsum" id="1Q9S"/>
<dbReference type="SMR" id="Q969G6"/>
<dbReference type="BioGRID" id="120594">
    <property type="interactions" value="30"/>
</dbReference>
<dbReference type="DIP" id="DIP-60454N"/>
<dbReference type="FunCoup" id="Q969G6">
    <property type="interactions" value="2658"/>
</dbReference>
<dbReference type="IntAct" id="Q969G6">
    <property type="interactions" value="7"/>
</dbReference>
<dbReference type="STRING" id="9606.ENSP00000365926"/>
<dbReference type="DrugBank" id="DB03247">
    <property type="generic name" value="Flavin mononucleotide"/>
</dbReference>
<dbReference type="DrugBank" id="DB00140">
    <property type="generic name" value="Riboflavin"/>
</dbReference>
<dbReference type="DrugCentral" id="Q969G6"/>
<dbReference type="GlyGen" id="Q969G6">
    <property type="glycosylation" value="1 site, 1 O-linked glycan (1 site)"/>
</dbReference>
<dbReference type="iPTMnet" id="Q969G6"/>
<dbReference type="PhosphoSitePlus" id="Q969G6"/>
<dbReference type="BioMuta" id="RFK"/>
<dbReference type="DMDM" id="209572667"/>
<dbReference type="jPOST" id="Q969G6"/>
<dbReference type="MassIVE" id="Q969G6"/>
<dbReference type="PaxDb" id="9606-ENSP00000365926"/>
<dbReference type="PeptideAtlas" id="Q969G6"/>
<dbReference type="ProteomicsDB" id="75757"/>
<dbReference type="Pumba" id="Q969G6"/>
<dbReference type="Antibodypedia" id="27259">
    <property type="antibodies" value="154 antibodies from 24 providers"/>
</dbReference>
<dbReference type="DNASU" id="55312"/>
<dbReference type="Ensembl" id="ENST00000376736.6">
    <property type="protein sequence ID" value="ENSP00000365926.1"/>
    <property type="gene ID" value="ENSG00000135002.12"/>
</dbReference>
<dbReference type="GeneID" id="55312"/>
<dbReference type="KEGG" id="hsa:55312"/>
<dbReference type="MANE-Select" id="ENST00000376736.6">
    <property type="protein sequence ID" value="ENSP00000365926.1"/>
    <property type="RefSeq nucleotide sequence ID" value="NM_018339.6"/>
    <property type="RefSeq protein sequence ID" value="NP_060809.3"/>
</dbReference>
<dbReference type="UCSC" id="uc004akd.3">
    <property type="organism name" value="human"/>
</dbReference>
<dbReference type="AGR" id="HGNC:30324"/>
<dbReference type="CTD" id="55312"/>
<dbReference type="DisGeNET" id="55312"/>
<dbReference type="GeneCards" id="RFK"/>
<dbReference type="HGNC" id="HGNC:30324">
    <property type="gene designation" value="RFK"/>
</dbReference>
<dbReference type="HPA" id="ENSG00000135002">
    <property type="expression patterns" value="Low tissue specificity"/>
</dbReference>
<dbReference type="MIM" id="613010">
    <property type="type" value="gene"/>
</dbReference>
<dbReference type="neXtProt" id="NX_Q969G6"/>
<dbReference type="OpenTargets" id="ENSG00000135002"/>
<dbReference type="PharmGKB" id="PA134916697"/>
<dbReference type="VEuPathDB" id="HostDB:ENSG00000135002"/>
<dbReference type="eggNOG" id="KOG3110">
    <property type="taxonomic scope" value="Eukaryota"/>
</dbReference>
<dbReference type="GeneTree" id="ENSGT00390000015537"/>
<dbReference type="HOGENOM" id="CLU_048437_3_3_1"/>
<dbReference type="InParanoid" id="Q969G6"/>
<dbReference type="OMA" id="NGEVHKM"/>
<dbReference type="OrthoDB" id="276388at2759"/>
<dbReference type="PAN-GO" id="Q969G6">
    <property type="GO annotations" value="4 GO annotations based on evolutionary models"/>
</dbReference>
<dbReference type="PhylomeDB" id="Q969G6"/>
<dbReference type="TreeFam" id="TF313786"/>
<dbReference type="BioCyc" id="MetaCyc:HS05938-MONOMER"/>
<dbReference type="BRENDA" id="2.7.1.26">
    <property type="organism ID" value="2681"/>
</dbReference>
<dbReference type="PathwayCommons" id="Q969G6"/>
<dbReference type="Reactome" id="R-HSA-196843">
    <property type="pathway name" value="Vitamin B2 (riboflavin) metabolism"/>
</dbReference>
<dbReference type="SignaLink" id="Q969G6"/>
<dbReference type="UniPathway" id="UPA00276">
    <property type="reaction ID" value="UER00406"/>
</dbReference>
<dbReference type="BioGRID-ORCS" id="55312">
    <property type="hits" value="271 hits in 1132 CRISPR screens"/>
</dbReference>
<dbReference type="ChiTaRS" id="RFK">
    <property type="organism name" value="human"/>
</dbReference>
<dbReference type="EvolutionaryTrace" id="Q969G6"/>
<dbReference type="GenomeRNAi" id="55312"/>
<dbReference type="Pharos" id="Q969G6">
    <property type="development level" value="Tbio"/>
</dbReference>
<dbReference type="PRO" id="PR:Q969G6"/>
<dbReference type="Proteomes" id="UP000005640">
    <property type="component" value="Chromosome 9"/>
</dbReference>
<dbReference type="RNAct" id="Q969G6">
    <property type="molecule type" value="protein"/>
</dbReference>
<dbReference type="Bgee" id="ENSG00000135002">
    <property type="expression patterns" value="Expressed in endothelial cell and 218 other cell types or tissues"/>
</dbReference>
<dbReference type="ExpressionAtlas" id="Q969G6">
    <property type="expression patterns" value="baseline and differential"/>
</dbReference>
<dbReference type="GO" id="GO:0005737">
    <property type="term" value="C:cytoplasm"/>
    <property type="evidence" value="ECO:0000303"/>
    <property type="project" value="UniProtKB"/>
</dbReference>
<dbReference type="GO" id="GO:0005829">
    <property type="term" value="C:cytosol"/>
    <property type="evidence" value="ECO:0000304"/>
    <property type="project" value="Reactome"/>
</dbReference>
<dbReference type="GO" id="GO:0005739">
    <property type="term" value="C:mitochondrion"/>
    <property type="evidence" value="ECO:0006056"/>
    <property type="project" value="FlyBase"/>
</dbReference>
<dbReference type="GO" id="GO:0005524">
    <property type="term" value="F:ATP binding"/>
    <property type="evidence" value="ECO:0007669"/>
    <property type="project" value="UniProtKB-KW"/>
</dbReference>
<dbReference type="GO" id="GO:0046872">
    <property type="term" value="F:metal ion binding"/>
    <property type="evidence" value="ECO:0007669"/>
    <property type="project" value="UniProtKB-KW"/>
</dbReference>
<dbReference type="GO" id="GO:0008531">
    <property type="term" value="F:riboflavin kinase activity"/>
    <property type="evidence" value="ECO:0000314"/>
    <property type="project" value="UniProtKB"/>
</dbReference>
<dbReference type="GO" id="GO:0006915">
    <property type="term" value="P:apoptotic process"/>
    <property type="evidence" value="ECO:0000315"/>
    <property type="project" value="MGI"/>
</dbReference>
<dbReference type="GO" id="GO:0072388">
    <property type="term" value="P:flavin adenine dinucleotide biosynthetic process"/>
    <property type="evidence" value="ECO:0007669"/>
    <property type="project" value="Ensembl"/>
</dbReference>
<dbReference type="GO" id="GO:0009398">
    <property type="term" value="P:FMN biosynthetic process"/>
    <property type="evidence" value="ECO:0000318"/>
    <property type="project" value="GO_Central"/>
</dbReference>
<dbReference type="GO" id="GO:0033864">
    <property type="term" value="P:positive regulation of NAD(P)H oxidase activity"/>
    <property type="evidence" value="ECO:0000315"/>
    <property type="project" value="MGI"/>
</dbReference>
<dbReference type="GO" id="GO:0072593">
    <property type="term" value="P:reactive oxygen species metabolic process"/>
    <property type="evidence" value="ECO:0007669"/>
    <property type="project" value="Ensembl"/>
</dbReference>
<dbReference type="GO" id="GO:0009231">
    <property type="term" value="P:riboflavin biosynthetic process"/>
    <property type="evidence" value="ECO:0000303"/>
    <property type="project" value="UniProtKB"/>
</dbReference>
<dbReference type="GO" id="GO:0006771">
    <property type="term" value="P:riboflavin metabolic process"/>
    <property type="evidence" value="ECO:0000314"/>
    <property type="project" value="UniProtKB"/>
</dbReference>
<dbReference type="FunFam" id="2.40.30.30:FF:000002">
    <property type="entry name" value="Riboflavin kinase, putative"/>
    <property type="match status" value="1"/>
</dbReference>
<dbReference type="Gene3D" id="2.40.30.30">
    <property type="entry name" value="Riboflavin kinase-like"/>
    <property type="match status" value="1"/>
</dbReference>
<dbReference type="InterPro" id="IPR023468">
    <property type="entry name" value="Riboflavin_kinase"/>
</dbReference>
<dbReference type="InterPro" id="IPR015865">
    <property type="entry name" value="Riboflavin_kinase_bac/euk"/>
</dbReference>
<dbReference type="InterPro" id="IPR023465">
    <property type="entry name" value="Riboflavin_kinase_dom_sf"/>
</dbReference>
<dbReference type="PANTHER" id="PTHR22749:SF6">
    <property type="entry name" value="RIBOFLAVIN KINASE"/>
    <property type="match status" value="1"/>
</dbReference>
<dbReference type="PANTHER" id="PTHR22749">
    <property type="entry name" value="RIBOFLAVIN KINASE/FMN ADENYLYLTRANSFERASE"/>
    <property type="match status" value="1"/>
</dbReference>
<dbReference type="Pfam" id="PF01687">
    <property type="entry name" value="Flavokinase"/>
    <property type="match status" value="1"/>
</dbReference>
<dbReference type="SMART" id="SM00904">
    <property type="entry name" value="Flavokinase"/>
    <property type="match status" value="1"/>
</dbReference>
<dbReference type="SUPFAM" id="SSF82114">
    <property type="entry name" value="Riboflavin kinase-like"/>
    <property type="match status" value="1"/>
</dbReference>
<protein>
    <recommendedName>
        <fullName evidence="6">Riboflavin kinase</fullName>
        <ecNumber evidence="4">2.7.1.26</ecNumber>
    </recommendedName>
    <alternativeName>
        <fullName>ATP:riboflavin 5'-phosphotransferase</fullName>
    </alternativeName>
    <alternativeName>
        <fullName>Flavokinase</fullName>
    </alternativeName>
</protein>
<reference key="1">
    <citation type="journal article" date="2004" name="Nat. Genet.">
        <title>Complete sequencing and characterization of 21,243 full-length human cDNAs.</title>
        <authorList>
            <person name="Ota T."/>
            <person name="Suzuki Y."/>
            <person name="Nishikawa T."/>
            <person name="Otsuki T."/>
            <person name="Sugiyama T."/>
            <person name="Irie R."/>
            <person name="Wakamatsu A."/>
            <person name="Hayashi K."/>
            <person name="Sato H."/>
            <person name="Nagai K."/>
            <person name="Kimura K."/>
            <person name="Makita H."/>
            <person name="Sekine M."/>
            <person name="Obayashi M."/>
            <person name="Nishi T."/>
            <person name="Shibahara T."/>
            <person name="Tanaka T."/>
            <person name="Ishii S."/>
            <person name="Yamamoto J."/>
            <person name="Saito K."/>
            <person name="Kawai Y."/>
            <person name="Isono Y."/>
            <person name="Nakamura Y."/>
            <person name="Nagahari K."/>
            <person name="Murakami K."/>
            <person name="Yasuda T."/>
            <person name="Iwayanagi T."/>
            <person name="Wagatsuma M."/>
            <person name="Shiratori A."/>
            <person name="Sudo H."/>
            <person name="Hosoiri T."/>
            <person name="Kaku Y."/>
            <person name="Kodaira H."/>
            <person name="Kondo H."/>
            <person name="Sugawara M."/>
            <person name="Takahashi M."/>
            <person name="Kanda K."/>
            <person name="Yokoi T."/>
            <person name="Furuya T."/>
            <person name="Kikkawa E."/>
            <person name="Omura Y."/>
            <person name="Abe K."/>
            <person name="Kamihara K."/>
            <person name="Katsuta N."/>
            <person name="Sato K."/>
            <person name="Tanikawa M."/>
            <person name="Yamazaki M."/>
            <person name="Ninomiya K."/>
            <person name="Ishibashi T."/>
            <person name="Yamashita H."/>
            <person name="Murakawa K."/>
            <person name="Fujimori K."/>
            <person name="Tanai H."/>
            <person name="Kimata M."/>
            <person name="Watanabe M."/>
            <person name="Hiraoka S."/>
            <person name="Chiba Y."/>
            <person name="Ishida S."/>
            <person name="Ono Y."/>
            <person name="Takiguchi S."/>
            <person name="Watanabe S."/>
            <person name="Yosida M."/>
            <person name="Hotuta T."/>
            <person name="Kusano J."/>
            <person name="Kanehori K."/>
            <person name="Takahashi-Fujii A."/>
            <person name="Hara H."/>
            <person name="Tanase T.-O."/>
            <person name="Nomura Y."/>
            <person name="Togiya S."/>
            <person name="Komai F."/>
            <person name="Hara R."/>
            <person name="Takeuchi K."/>
            <person name="Arita M."/>
            <person name="Imose N."/>
            <person name="Musashino K."/>
            <person name="Yuuki H."/>
            <person name="Oshima A."/>
            <person name="Sasaki N."/>
            <person name="Aotsuka S."/>
            <person name="Yoshikawa Y."/>
            <person name="Matsunawa H."/>
            <person name="Ichihara T."/>
            <person name="Shiohata N."/>
            <person name="Sano S."/>
            <person name="Moriya S."/>
            <person name="Momiyama H."/>
            <person name="Satoh N."/>
            <person name="Takami S."/>
            <person name="Terashima Y."/>
            <person name="Suzuki O."/>
            <person name="Nakagawa S."/>
            <person name="Senoh A."/>
            <person name="Mizoguchi H."/>
            <person name="Goto Y."/>
            <person name="Shimizu F."/>
            <person name="Wakebe H."/>
            <person name="Hishigaki H."/>
            <person name="Watanabe T."/>
            <person name="Sugiyama A."/>
            <person name="Takemoto M."/>
            <person name="Kawakami B."/>
            <person name="Yamazaki M."/>
            <person name="Watanabe K."/>
            <person name="Kumagai A."/>
            <person name="Itakura S."/>
            <person name="Fukuzumi Y."/>
            <person name="Fujimori Y."/>
            <person name="Komiyama M."/>
            <person name="Tashiro H."/>
            <person name="Tanigami A."/>
            <person name="Fujiwara T."/>
            <person name="Ono T."/>
            <person name="Yamada K."/>
            <person name="Fujii Y."/>
            <person name="Ozaki K."/>
            <person name="Hirao M."/>
            <person name="Ohmori Y."/>
            <person name="Kawabata A."/>
            <person name="Hikiji T."/>
            <person name="Kobatake N."/>
            <person name="Inagaki H."/>
            <person name="Ikema Y."/>
            <person name="Okamoto S."/>
            <person name="Okitani R."/>
            <person name="Kawakami T."/>
            <person name="Noguchi S."/>
            <person name="Itoh T."/>
            <person name="Shigeta K."/>
            <person name="Senba T."/>
            <person name="Matsumura K."/>
            <person name="Nakajima Y."/>
            <person name="Mizuno T."/>
            <person name="Morinaga M."/>
            <person name="Sasaki M."/>
            <person name="Togashi T."/>
            <person name="Oyama M."/>
            <person name="Hata H."/>
            <person name="Watanabe M."/>
            <person name="Komatsu T."/>
            <person name="Mizushima-Sugano J."/>
            <person name="Satoh T."/>
            <person name="Shirai Y."/>
            <person name="Takahashi Y."/>
            <person name="Nakagawa K."/>
            <person name="Okumura K."/>
            <person name="Nagase T."/>
            <person name="Nomura N."/>
            <person name="Kikuchi H."/>
            <person name="Masuho Y."/>
            <person name="Yamashita R."/>
            <person name="Nakai K."/>
            <person name="Yada T."/>
            <person name="Nakamura Y."/>
            <person name="Ohara O."/>
            <person name="Isogai T."/>
            <person name="Sugano S."/>
        </authorList>
    </citation>
    <scope>NUCLEOTIDE SEQUENCE [LARGE SCALE MRNA]</scope>
    <source>
        <tissue>Placenta</tissue>
    </source>
</reference>
<reference key="2">
    <citation type="journal article" date="2004" name="Nature">
        <title>DNA sequence and analysis of human chromosome 9.</title>
        <authorList>
            <person name="Humphray S.J."/>
            <person name="Oliver K."/>
            <person name="Hunt A.R."/>
            <person name="Plumb R.W."/>
            <person name="Loveland J.E."/>
            <person name="Howe K.L."/>
            <person name="Andrews T.D."/>
            <person name="Searle S."/>
            <person name="Hunt S.E."/>
            <person name="Scott C.E."/>
            <person name="Jones M.C."/>
            <person name="Ainscough R."/>
            <person name="Almeida J.P."/>
            <person name="Ambrose K.D."/>
            <person name="Ashwell R.I.S."/>
            <person name="Babbage A.K."/>
            <person name="Babbage S."/>
            <person name="Bagguley C.L."/>
            <person name="Bailey J."/>
            <person name="Banerjee R."/>
            <person name="Barker D.J."/>
            <person name="Barlow K.F."/>
            <person name="Bates K."/>
            <person name="Beasley H."/>
            <person name="Beasley O."/>
            <person name="Bird C.P."/>
            <person name="Bray-Allen S."/>
            <person name="Brown A.J."/>
            <person name="Brown J.Y."/>
            <person name="Burford D."/>
            <person name="Burrill W."/>
            <person name="Burton J."/>
            <person name="Carder C."/>
            <person name="Carter N.P."/>
            <person name="Chapman J.C."/>
            <person name="Chen Y."/>
            <person name="Clarke G."/>
            <person name="Clark S.Y."/>
            <person name="Clee C.M."/>
            <person name="Clegg S."/>
            <person name="Collier R.E."/>
            <person name="Corby N."/>
            <person name="Crosier M."/>
            <person name="Cummings A.T."/>
            <person name="Davies J."/>
            <person name="Dhami P."/>
            <person name="Dunn M."/>
            <person name="Dutta I."/>
            <person name="Dyer L.W."/>
            <person name="Earthrowl M.E."/>
            <person name="Faulkner L."/>
            <person name="Fleming C.J."/>
            <person name="Frankish A."/>
            <person name="Frankland J.A."/>
            <person name="French L."/>
            <person name="Fricker D.G."/>
            <person name="Garner P."/>
            <person name="Garnett J."/>
            <person name="Ghori J."/>
            <person name="Gilbert J.G.R."/>
            <person name="Glison C."/>
            <person name="Grafham D.V."/>
            <person name="Gribble S."/>
            <person name="Griffiths C."/>
            <person name="Griffiths-Jones S."/>
            <person name="Grocock R."/>
            <person name="Guy J."/>
            <person name="Hall R.E."/>
            <person name="Hammond S."/>
            <person name="Harley J.L."/>
            <person name="Harrison E.S.I."/>
            <person name="Hart E.A."/>
            <person name="Heath P.D."/>
            <person name="Henderson C.D."/>
            <person name="Hopkins B.L."/>
            <person name="Howard P.J."/>
            <person name="Howden P.J."/>
            <person name="Huckle E."/>
            <person name="Johnson C."/>
            <person name="Johnson D."/>
            <person name="Joy A.A."/>
            <person name="Kay M."/>
            <person name="Keenan S."/>
            <person name="Kershaw J.K."/>
            <person name="Kimberley A.M."/>
            <person name="King A."/>
            <person name="Knights A."/>
            <person name="Laird G.K."/>
            <person name="Langford C."/>
            <person name="Lawlor S."/>
            <person name="Leongamornlert D.A."/>
            <person name="Leversha M."/>
            <person name="Lloyd C."/>
            <person name="Lloyd D.M."/>
            <person name="Lovell J."/>
            <person name="Martin S."/>
            <person name="Mashreghi-Mohammadi M."/>
            <person name="Matthews L."/>
            <person name="McLaren S."/>
            <person name="McLay K.E."/>
            <person name="McMurray A."/>
            <person name="Milne S."/>
            <person name="Nickerson T."/>
            <person name="Nisbett J."/>
            <person name="Nordsiek G."/>
            <person name="Pearce A.V."/>
            <person name="Peck A.I."/>
            <person name="Porter K.M."/>
            <person name="Pandian R."/>
            <person name="Pelan S."/>
            <person name="Phillimore B."/>
            <person name="Povey S."/>
            <person name="Ramsey Y."/>
            <person name="Rand V."/>
            <person name="Scharfe M."/>
            <person name="Sehra H.K."/>
            <person name="Shownkeen R."/>
            <person name="Sims S.K."/>
            <person name="Skuce C.D."/>
            <person name="Smith M."/>
            <person name="Steward C.A."/>
            <person name="Swarbreck D."/>
            <person name="Sycamore N."/>
            <person name="Tester J."/>
            <person name="Thorpe A."/>
            <person name="Tracey A."/>
            <person name="Tromans A."/>
            <person name="Thomas D.W."/>
            <person name="Wall M."/>
            <person name="Wallis J.M."/>
            <person name="West A.P."/>
            <person name="Whitehead S.L."/>
            <person name="Willey D.L."/>
            <person name="Williams S.A."/>
            <person name="Wilming L."/>
            <person name="Wray P.W."/>
            <person name="Young L."/>
            <person name="Ashurst J.L."/>
            <person name="Coulson A."/>
            <person name="Blocker H."/>
            <person name="Durbin R.M."/>
            <person name="Sulston J.E."/>
            <person name="Hubbard T."/>
            <person name="Jackson M.J."/>
            <person name="Bentley D.R."/>
            <person name="Beck S."/>
            <person name="Rogers J."/>
            <person name="Dunham I."/>
        </authorList>
    </citation>
    <scope>NUCLEOTIDE SEQUENCE [LARGE SCALE GENOMIC DNA]</scope>
</reference>
<reference key="3">
    <citation type="journal article" date="2004" name="Genome Res.">
        <title>The status, quality, and expansion of the NIH full-length cDNA project: the Mammalian Gene Collection (MGC).</title>
        <authorList>
            <consortium name="The MGC Project Team"/>
        </authorList>
    </citation>
    <scope>NUCLEOTIDE SEQUENCE [LARGE SCALE MRNA]</scope>
    <source>
        <tissue>Urinary bladder</tissue>
    </source>
</reference>
<reference key="4">
    <citation type="journal article" date="2009" name="Nature">
        <title>Riboflavin kinase couples TNF receptor 1 to NADPH oxidase.</title>
        <authorList>
            <person name="Yazdanpanah B."/>
            <person name="Wiegmann K."/>
            <person name="Tchikov V."/>
            <person name="Krut O."/>
            <person name="Pongratz C."/>
            <person name="Schramm M."/>
            <person name="Kleinridders A."/>
            <person name="Wunderlich T."/>
            <person name="Kashkar H."/>
            <person name="Utermoehlen O."/>
            <person name="Bruening J.C."/>
            <person name="Schuetze S."/>
            <person name="Kroenke M."/>
        </authorList>
    </citation>
    <scope>FUNCTION</scope>
    <scope>CATALYTIC ACTIVITY</scope>
    <scope>PATHWAY</scope>
    <scope>INTERACTION WITH CYBA; TNFRSF1A AND TRADD</scope>
    <scope>MUTAGENESIS OF GLU-79</scope>
</reference>
<reference key="5">
    <citation type="journal article" date="2011" name="BMC Syst. Biol.">
        <title>Initial characterization of the human central proteome.</title>
        <authorList>
            <person name="Burkard T.R."/>
            <person name="Planyavsky M."/>
            <person name="Kaupe I."/>
            <person name="Breitwieser F.P."/>
            <person name="Buerckstuemmer T."/>
            <person name="Bennett K.L."/>
            <person name="Superti-Furga G."/>
            <person name="Colinge J."/>
        </authorList>
    </citation>
    <scope>IDENTIFICATION BY MASS SPECTROMETRY [LARGE SCALE ANALYSIS]</scope>
</reference>
<reference key="6">
    <citation type="journal article" date="2003" name="Biochemistry">
        <title>Ligand binding-induced conformational changes in riboflavin kinase: structural basis for the ordered mechanism.</title>
        <authorList>
            <person name="Karthikeyan S."/>
            <person name="Zhou Q."/>
            <person name="Osterman A.L."/>
            <person name="Zhang H."/>
        </authorList>
    </citation>
    <scope>X-RAY CRYSTALLOGRAPHY (2.42 ANGSTROMS) OF 1-148 IN COMPLEX WITH ADP; FMN AND MAGNESIUM</scope>
</reference>
<reference key="7">
    <citation type="journal article" date="2003" name="Structure">
        <title>Crystal structure of human riboflavin kinase reveals a beta barrel fold and a novel active site arch.</title>
        <authorList>
            <person name="Karthikeyan S."/>
            <person name="Zhou Q."/>
            <person name="Mseeh F."/>
            <person name="Grishin N.V."/>
            <person name="Osterman A.L."/>
            <person name="Zhang H."/>
        </authorList>
    </citation>
    <scope>X-RAY CRYSTALLOGRAPHY (1.70 ANGSTROMS) OF 2-148 IN COMPLEX WITH MG-ADP AND RIBOFLAVIN NUCLEOTIDE</scope>
</reference>
<feature type="chain" id="PRO_0000194148" description="Riboflavin kinase">
    <location>
        <begin position="1"/>
        <end position="155"/>
    </location>
</feature>
<feature type="active site" description="Nucleophile" evidence="1">
    <location>
        <position position="79"/>
    </location>
</feature>
<feature type="binding site" evidence="2 3 7 8 9 10">
    <location>
        <position position="15"/>
    </location>
    <ligand>
        <name>ATP</name>
        <dbReference type="ChEBI" id="CHEBI:30616"/>
    </ligand>
</feature>
<feature type="binding site" evidence="2 3 7 8 9 10">
    <location>
        <position position="21"/>
    </location>
    <ligand>
        <name>ATP</name>
        <dbReference type="ChEBI" id="CHEBI:30616"/>
    </ligand>
</feature>
<feature type="binding site" evidence="2 3 7 8 9 10">
    <location>
        <position position="27"/>
    </location>
    <ligand>
        <name>ATP</name>
        <dbReference type="ChEBI" id="CHEBI:30616"/>
    </ligand>
</feature>
<feature type="binding site" evidence="3 10">
    <location>
        <position position="27"/>
    </location>
    <ligand>
        <name>Mg(2+)</name>
        <dbReference type="ChEBI" id="CHEBI:18420"/>
    </ligand>
</feature>
<feature type="binding site" evidence="2 3 7 8 9 10">
    <location>
        <position position="29"/>
    </location>
    <ligand>
        <name>ATP</name>
        <dbReference type="ChEBI" id="CHEBI:30616"/>
    </ligand>
</feature>
<feature type="binding site" evidence="3 10">
    <location>
        <position position="29"/>
    </location>
    <ligand>
        <name>Mg(2+)</name>
        <dbReference type="ChEBI" id="CHEBI:18420"/>
    </ligand>
</feature>
<feature type="binding site" evidence="2 3 7 8 9 10">
    <location>
        <position position="82"/>
    </location>
    <ligand>
        <name>ATP</name>
        <dbReference type="ChEBI" id="CHEBI:30616"/>
    </ligand>
</feature>
<feature type="binding site" evidence="2 3 7 8 9 10">
    <location>
        <position position="84"/>
    </location>
    <ligand>
        <name>ATP</name>
        <dbReference type="ChEBI" id="CHEBI:30616"/>
    </ligand>
</feature>
<feature type="binding site" evidence="2 3 7 8 9 10">
    <location>
        <position position="91"/>
    </location>
    <ligand>
        <name>ATP</name>
        <dbReference type="ChEBI" id="CHEBI:30616"/>
    </ligand>
</feature>
<feature type="binding site" evidence="2 3 7 8 9 10">
    <location>
        <position position="104"/>
    </location>
    <ligand>
        <name>FMN</name>
        <dbReference type="ChEBI" id="CHEBI:58210"/>
    </ligand>
</feature>
<feature type="binding site" evidence="2 3 7 8 9 10">
    <location>
        <position position="107"/>
    </location>
    <ligand>
        <name>FMN</name>
        <dbReference type="ChEBI" id="CHEBI:58210"/>
    </ligand>
</feature>
<feature type="binding site" evidence="2 3 7 8 9 10">
    <location>
        <position position="109"/>
    </location>
    <ligand>
        <name>FMN</name>
        <dbReference type="ChEBI" id="CHEBI:58210"/>
    </ligand>
</feature>
<feature type="mutagenesis site" description="Loss of riboflavin kinase activity. No effect on TNFRSF1A- and CYBA-binding." evidence="4">
    <original>E</original>
    <variation>Q</variation>
    <location>
        <position position="79"/>
    </location>
</feature>
<feature type="sequence conflict" description="In Ref. 1; BAA92033." evidence="5" ref="1">
    <original>N</original>
    <variation>S</variation>
    <location>
        <position position="96"/>
    </location>
</feature>
<feature type="strand" evidence="11">
    <location>
        <begin position="5"/>
        <end position="11"/>
    </location>
</feature>
<feature type="strand" evidence="11">
    <location>
        <begin position="16"/>
        <end position="18"/>
    </location>
</feature>
<feature type="helix" evidence="11">
    <location>
        <begin position="20"/>
        <end position="23"/>
    </location>
</feature>
<feature type="helix" evidence="11">
    <location>
        <begin position="32"/>
        <end position="36"/>
    </location>
</feature>
<feature type="strand" evidence="11">
    <location>
        <begin position="44"/>
        <end position="53"/>
    </location>
</feature>
<feature type="strand" evidence="11">
    <location>
        <begin position="59"/>
        <end position="67"/>
    </location>
</feature>
<feature type="strand" evidence="11">
    <location>
        <begin position="69"/>
        <end position="74"/>
    </location>
</feature>
<feature type="strand" evidence="11">
    <location>
        <begin position="76"/>
        <end position="84"/>
    </location>
</feature>
<feature type="strand" evidence="11">
    <location>
        <begin position="93"/>
        <end position="104"/>
    </location>
</feature>
<feature type="helix" evidence="11">
    <location>
        <begin position="112"/>
        <end position="129"/>
    </location>
</feature>
<feature type="helix" evidence="11">
    <location>
        <begin position="133"/>
        <end position="136"/>
    </location>
</feature>
<feature type="helix" evidence="11">
    <location>
        <begin position="137"/>
        <end position="140"/>
    </location>
</feature>
<feature type="helix" evidence="11">
    <location>
        <begin position="142"/>
        <end position="146"/>
    </location>
</feature>
<organism>
    <name type="scientific">Homo sapiens</name>
    <name type="common">Human</name>
    <dbReference type="NCBI Taxonomy" id="9606"/>
    <lineage>
        <taxon>Eukaryota</taxon>
        <taxon>Metazoa</taxon>
        <taxon>Chordata</taxon>
        <taxon>Craniata</taxon>
        <taxon>Vertebrata</taxon>
        <taxon>Euteleostomi</taxon>
        <taxon>Mammalia</taxon>
        <taxon>Eutheria</taxon>
        <taxon>Euarchontoglires</taxon>
        <taxon>Primates</taxon>
        <taxon>Haplorrhini</taxon>
        <taxon>Catarrhini</taxon>
        <taxon>Hominidae</taxon>
        <taxon>Homo</taxon>
    </lineage>
</organism>
<proteinExistence type="evidence at protein level"/>
<name>RIFK_HUMAN</name>